<feature type="chain" id="PRO_0000292121" description="Photosystem I iron-sulfur center">
    <location>
        <begin position="1"/>
        <end position="81"/>
    </location>
</feature>
<feature type="domain" description="4Fe-4S ferredoxin-type 1" evidence="1">
    <location>
        <begin position="2"/>
        <end position="31"/>
    </location>
</feature>
<feature type="domain" description="4Fe-4S ferredoxin-type 2" evidence="1">
    <location>
        <begin position="39"/>
        <end position="68"/>
    </location>
</feature>
<feature type="binding site" evidence="1">
    <location>
        <position position="11"/>
    </location>
    <ligand>
        <name>[4Fe-4S] cluster</name>
        <dbReference type="ChEBI" id="CHEBI:49883"/>
        <label>1</label>
    </ligand>
</feature>
<feature type="binding site" evidence="1">
    <location>
        <position position="14"/>
    </location>
    <ligand>
        <name>[4Fe-4S] cluster</name>
        <dbReference type="ChEBI" id="CHEBI:49883"/>
        <label>1</label>
    </ligand>
</feature>
<feature type="binding site" evidence="1">
    <location>
        <position position="17"/>
    </location>
    <ligand>
        <name>[4Fe-4S] cluster</name>
        <dbReference type="ChEBI" id="CHEBI:49883"/>
        <label>1</label>
    </ligand>
</feature>
<feature type="binding site" evidence="1">
    <location>
        <position position="21"/>
    </location>
    <ligand>
        <name>[4Fe-4S] cluster</name>
        <dbReference type="ChEBI" id="CHEBI:49883"/>
        <label>2</label>
    </ligand>
</feature>
<feature type="binding site" evidence="1">
    <location>
        <position position="48"/>
    </location>
    <ligand>
        <name>[4Fe-4S] cluster</name>
        <dbReference type="ChEBI" id="CHEBI:49883"/>
        <label>2</label>
    </ligand>
</feature>
<feature type="binding site" evidence="1">
    <location>
        <position position="51"/>
    </location>
    <ligand>
        <name>[4Fe-4S] cluster</name>
        <dbReference type="ChEBI" id="CHEBI:49883"/>
        <label>2</label>
    </ligand>
</feature>
<feature type="binding site" evidence="1">
    <location>
        <position position="54"/>
    </location>
    <ligand>
        <name>[4Fe-4S] cluster</name>
        <dbReference type="ChEBI" id="CHEBI:49883"/>
        <label>2</label>
    </ligand>
</feature>
<feature type="binding site" evidence="1">
    <location>
        <position position="58"/>
    </location>
    <ligand>
        <name>[4Fe-4S] cluster</name>
        <dbReference type="ChEBI" id="CHEBI:49883"/>
        <label>1</label>
    </ligand>
</feature>
<sequence>MSHSVKIYDTCIGCTQCVRACPTDVLEMIPWDGCKAKQIASAPRTEDCVGCKRCESACPTDFLSVRVYLWHETTRSMGLAY</sequence>
<name>PSAC_LOBMA</name>
<dbReference type="EC" id="1.97.1.12" evidence="1"/>
<dbReference type="EMBL" id="AP009375">
    <property type="protein sequence ID" value="BAF50603.1"/>
    <property type="molecule type" value="Genomic_DNA"/>
</dbReference>
<dbReference type="RefSeq" id="YP_001123778.1">
    <property type="nucleotide sequence ID" value="NC_009274.1"/>
</dbReference>
<dbReference type="SMR" id="A4QLP8"/>
<dbReference type="GeneID" id="4964899"/>
<dbReference type="GO" id="GO:0009535">
    <property type="term" value="C:chloroplast thylakoid membrane"/>
    <property type="evidence" value="ECO:0007669"/>
    <property type="project" value="UniProtKB-SubCell"/>
</dbReference>
<dbReference type="GO" id="GO:0009522">
    <property type="term" value="C:photosystem I"/>
    <property type="evidence" value="ECO:0007669"/>
    <property type="project" value="UniProtKB-KW"/>
</dbReference>
<dbReference type="GO" id="GO:0051539">
    <property type="term" value="F:4 iron, 4 sulfur cluster binding"/>
    <property type="evidence" value="ECO:0007669"/>
    <property type="project" value="UniProtKB-KW"/>
</dbReference>
<dbReference type="GO" id="GO:0009055">
    <property type="term" value="F:electron transfer activity"/>
    <property type="evidence" value="ECO:0007669"/>
    <property type="project" value="UniProtKB-UniRule"/>
</dbReference>
<dbReference type="GO" id="GO:0046872">
    <property type="term" value="F:metal ion binding"/>
    <property type="evidence" value="ECO:0007669"/>
    <property type="project" value="UniProtKB-KW"/>
</dbReference>
<dbReference type="GO" id="GO:0016491">
    <property type="term" value="F:oxidoreductase activity"/>
    <property type="evidence" value="ECO:0007669"/>
    <property type="project" value="UniProtKB-KW"/>
</dbReference>
<dbReference type="GO" id="GO:0009773">
    <property type="term" value="P:photosynthetic electron transport in photosystem I"/>
    <property type="evidence" value="ECO:0007669"/>
    <property type="project" value="InterPro"/>
</dbReference>
<dbReference type="FunFam" id="3.30.70.20:FF:000001">
    <property type="entry name" value="Photosystem I iron-sulfur center"/>
    <property type="match status" value="1"/>
</dbReference>
<dbReference type="Gene3D" id="3.30.70.20">
    <property type="match status" value="1"/>
</dbReference>
<dbReference type="HAMAP" id="MF_01303">
    <property type="entry name" value="PSI_PsaC"/>
    <property type="match status" value="1"/>
</dbReference>
<dbReference type="InterPro" id="IPR017896">
    <property type="entry name" value="4Fe4S_Fe-S-bd"/>
</dbReference>
<dbReference type="InterPro" id="IPR017900">
    <property type="entry name" value="4Fe4S_Fe_S_CS"/>
</dbReference>
<dbReference type="InterPro" id="IPR050157">
    <property type="entry name" value="PSI_iron-sulfur_center"/>
</dbReference>
<dbReference type="InterPro" id="IPR017491">
    <property type="entry name" value="PSI_PsaC"/>
</dbReference>
<dbReference type="NCBIfam" id="TIGR03048">
    <property type="entry name" value="PS_I_psaC"/>
    <property type="match status" value="1"/>
</dbReference>
<dbReference type="PANTHER" id="PTHR24960:SF79">
    <property type="entry name" value="PHOTOSYSTEM I IRON-SULFUR CENTER"/>
    <property type="match status" value="1"/>
</dbReference>
<dbReference type="PANTHER" id="PTHR24960">
    <property type="entry name" value="PHOTOSYSTEM I IRON-SULFUR CENTER-RELATED"/>
    <property type="match status" value="1"/>
</dbReference>
<dbReference type="Pfam" id="PF14697">
    <property type="entry name" value="Fer4_21"/>
    <property type="match status" value="1"/>
</dbReference>
<dbReference type="SUPFAM" id="SSF54862">
    <property type="entry name" value="4Fe-4S ferredoxins"/>
    <property type="match status" value="1"/>
</dbReference>
<dbReference type="PROSITE" id="PS00198">
    <property type="entry name" value="4FE4S_FER_1"/>
    <property type="match status" value="2"/>
</dbReference>
<dbReference type="PROSITE" id="PS51379">
    <property type="entry name" value="4FE4S_FER_2"/>
    <property type="match status" value="2"/>
</dbReference>
<protein>
    <recommendedName>
        <fullName evidence="1">Photosystem I iron-sulfur center</fullName>
        <ecNumber evidence="1">1.97.1.12</ecNumber>
    </recommendedName>
    <alternativeName>
        <fullName evidence="1">9 kDa polypeptide</fullName>
    </alternativeName>
    <alternativeName>
        <fullName evidence="1">PSI-C</fullName>
    </alternativeName>
    <alternativeName>
        <fullName evidence="1">Photosystem I subunit VII</fullName>
    </alternativeName>
    <alternativeName>
        <fullName evidence="1">PsaC</fullName>
    </alternativeName>
</protein>
<reference key="1">
    <citation type="submission" date="2007-03" db="EMBL/GenBank/DDBJ databases">
        <title>Sequencing analysis of Lobularia maritima chloroplast DNA.</title>
        <authorList>
            <person name="Hosouchi T."/>
            <person name="Tsuruoka H."/>
            <person name="Kotani H."/>
        </authorList>
    </citation>
    <scope>NUCLEOTIDE SEQUENCE [LARGE SCALE GENOMIC DNA]</scope>
</reference>
<evidence type="ECO:0000255" key="1">
    <source>
        <dbReference type="HAMAP-Rule" id="MF_01303"/>
    </source>
</evidence>
<gene>
    <name evidence="1" type="primary">psaC</name>
</gene>
<geneLocation type="chloroplast"/>
<accession>A4QLP8</accession>
<proteinExistence type="inferred from homology"/>
<comment type="function">
    <text evidence="1">Apoprotein for the two 4Fe-4S centers FA and FB of photosystem I (PSI); essential for photochemical activity. FB is the terminal electron acceptor of PSI, donating electrons to ferredoxin. The C-terminus interacts with PsaA/B/D and helps assemble the protein into the PSI complex. Required for binding of PsaD and PsaE to PSI. PSI is a plastocyanin-ferredoxin oxidoreductase, converting photonic excitation into a charge separation, which transfers an electron from the donor P700 chlorophyll pair to the spectroscopically characterized acceptors A0, A1, FX, FA and FB in turn.</text>
</comment>
<comment type="catalytic activity">
    <reaction evidence="1">
        <text>reduced [plastocyanin] + hnu + oxidized [2Fe-2S]-[ferredoxin] = oxidized [plastocyanin] + reduced [2Fe-2S]-[ferredoxin]</text>
        <dbReference type="Rhea" id="RHEA:30407"/>
        <dbReference type="Rhea" id="RHEA-COMP:10000"/>
        <dbReference type="Rhea" id="RHEA-COMP:10001"/>
        <dbReference type="Rhea" id="RHEA-COMP:10039"/>
        <dbReference type="Rhea" id="RHEA-COMP:10040"/>
        <dbReference type="ChEBI" id="CHEBI:29036"/>
        <dbReference type="ChEBI" id="CHEBI:30212"/>
        <dbReference type="ChEBI" id="CHEBI:33737"/>
        <dbReference type="ChEBI" id="CHEBI:33738"/>
        <dbReference type="ChEBI" id="CHEBI:49552"/>
        <dbReference type="EC" id="1.97.1.12"/>
    </reaction>
</comment>
<comment type="cofactor">
    <cofactor evidence="1">
        <name>[4Fe-4S] cluster</name>
        <dbReference type="ChEBI" id="CHEBI:49883"/>
    </cofactor>
    <text evidence="1">Binds 2 [4Fe-4S] clusters. Cluster 2 is most probably the spectroscopically characterized electron acceptor FA and cluster 1 is most probably FB.</text>
</comment>
<comment type="subunit">
    <text evidence="1">The eukaryotic PSI reaction center is composed of at least 11 subunits.</text>
</comment>
<comment type="subcellular location">
    <subcellularLocation>
        <location evidence="1">Plastid</location>
        <location evidence="1">Chloroplast thylakoid membrane</location>
        <topology evidence="1">Peripheral membrane protein</topology>
        <orientation evidence="1">Stromal side</orientation>
    </subcellularLocation>
</comment>
<organism>
    <name type="scientific">Lobularia maritima</name>
    <name type="common">Sweet alyssum</name>
    <name type="synonym">Alyssum maritimum</name>
    <dbReference type="NCBI Taxonomy" id="226051"/>
    <lineage>
        <taxon>Eukaryota</taxon>
        <taxon>Viridiplantae</taxon>
        <taxon>Streptophyta</taxon>
        <taxon>Embryophyta</taxon>
        <taxon>Tracheophyta</taxon>
        <taxon>Spermatophyta</taxon>
        <taxon>Magnoliopsida</taxon>
        <taxon>eudicotyledons</taxon>
        <taxon>Gunneridae</taxon>
        <taxon>Pentapetalae</taxon>
        <taxon>rosids</taxon>
        <taxon>malvids</taxon>
        <taxon>Brassicales</taxon>
        <taxon>Brassicaceae</taxon>
        <taxon>Anastaticeae</taxon>
        <taxon>Lobularia</taxon>
    </lineage>
</organism>
<keyword id="KW-0004">4Fe-4S</keyword>
<keyword id="KW-0150">Chloroplast</keyword>
<keyword id="KW-0249">Electron transport</keyword>
<keyword id="KW-0408">Iron</keyword>
<keyword id="KW-0411">Iron-sulfur</keyword>
<keyword id="KW-0472">Membrane</keyword>
<keyword id="KW-0479">Metal-binding</keyword>
<keyword id="KW-0560">Oxidoreductase</keyword>
<keyword id="KW-0602">Photosynthesis</keyword>
<keyword id="KW-0603">Photosystem I</keyword>
<keyword id="KW-0934">Plastid</keyword>
<keyword id="KW-0677">Repeat</keyword>
<keyword id="KW-0793">Thylakoid</keyword>
<keyword id="KW-0813">Transport</keyword>